<reference key="1">
    <citation type="submission" date="2006-09" db="EMBL/GenBank/DDBJ databases">
        <authorList>
            <consortium name="The Klebsiella pneumonia Genome Sequencing Project"/>
            <person name="McClelland M."/>
            <person name="Sanderson E.K."/>
            <person name="Spieth J."/>
            <person name="Clifton W.S."/>
            <person name="Latreille P."/>
            <person name="Sabo A."/>
            <person name="Pepin K."/>
            <person name="Bhonagiri V."/>
            <person name="Porwollik S."/>
            <person name="Ali J."/>
            <person name="Wilson R.K."/>
        </authorList>
    </citation>
    <scope>NUCLEOTIDE SEQUENCE [LARGE SCALE GENOMIC DNA]</scope>
    <source>
        <strain>ATCC 700721 / MGH 78578</strain>
    </source>
</reference>
<feature type="chain" id="PRO_1000022031" description="Small heat shock protein IbpB">
    <location>
        <begin position="1"/>
        <end position="142"/>
    </location>
</feature>
<feature type="domain" description="sHSP" evidence="2">
    <location>
        <begin position="26"/>
        <end position="137"/>
    </location>
</feature>
<keyword id="KW-0143">Chaperone</keyword>
<keyword id="KW-0963">Cytoplasm</keyword>
<keyword id="KW-0346">Stress response</keyword>
<gene>
    <name evidence="1" type="primary">ibpB</name>
    <name type="ordered locus">KPN78578_40490</name>
    <name type="ORF">KPN_04090</name>
</gene>
<accession>A6TFY9</accession>
<proteinExistence type="inferred from homology"/>
<name>IBPB_KLEP7</name>
<dbReference type="EMBL" id="CP000647">
    <property type="protein sequence ID" value="ABR79473.1"/>
    <property type="molecule type" value="Genomic_DNA"/>
</dbReference>
<dbReference type="RefSeq" id="WP_015959173.1">
    <property type="nucleotide sequence ID" value="NC_009648.1"/>
</dbReference>
<dbReference type="SMR" id="A6TFY9"/>
<dbReference type="STRING" id="272620.KPN_04090"/>
<dbReference type="PaxDb" id="272620-KPN_04090"/>
<dbReference type="EnsemblBacteria" id="ABR79473">
    <property type="protein sequence ID" value="ABR79473"/>
    <property type="gene ID" value="KPN_04090"/>
</dbReference>
<dbReference type="KEGG" id="kpn:KPN_04090"/>
<dbReference type="HOGENOM" id="CLU_046737_4_2_6"/>
<dbReference type="Proteomes" id="UP000000265">
    <property type="component" value="Chromosome"/>
</dbReference>
<dbReference type="GO" id="GO:0005737">
    <property type="term" value="C:cytoplasm"/>
    <property type="evidence" value="ECO:0007669"/>
    <property type="project" value="UniProtKB-SubCell"/>
</dbReference>
<dbReference type="GO" id="GO:0050821">
    <property type="term" value="P:protein stabilization"/>
    <property type="evidence" value="ECO:0007669"/>
    <property type="project" value="UniProtKB-UniRule"/>
</dbReference>
<dbReference type="CDD" id="cd06470">
    <property type="entry name" value="ACD_IbpA-B_like"/>
    <property type="match status" value="1"/>
</dbReference>
<dbReference type="Gene3D" id="2.60.40.790">
    <property type="match status" value="1"/>
</dbReference>
<dbReference type="HAMAP" id="MF_02001">
    <property type="entry name" value="HSP20_IbpB"/>
    <property type="match status" value="1"/>
</dbReference>
<dbReference type="InterPro" id="IPR002068">
    <property type="entry name" value="A-crystallin/Hsp20_dom"/>
</dbReference>
<dbReference type="InterPro" id="IPR037913">
    <property type="entry name" value="ACD_IbpA/B"/>
</dbReference>
<dbReference type="InterPro" id="IPR008978">
    <property type="entry name" value="HSP20-like_chaperone"/>
</dbReference>
<dbReference type="InterPro" id="IPR022848">
    <property type="entry name" value="HSP20_IbpB"/>
</dbReference>
<dbReference type="NCBIfam" id="NF008618">
    <property type="entry name" value="PRK11597.1"/>
    <property type="match status" value="1"/>
</dbReference>
<dbReference type="PANTHER" id="PTHR47062">
    <property type="match status" value="1"/>
</dbReference>
<dbReference type="PANTHER" id="PTHR47062:SF2">
    <property type="entry name" value="SMALL HEAT SHOCK PROTEIN IBPB"/>
    <property type="match status" value="1"/>
</dbReference>
<dbReference type="Pfam" id="PF00011">
    <property type="entry name" value="HSP20"/>
    <property type="match status" value="1"/>
</dbReference>
<dbReference type="SUPFAM" id="SSF49764">
    <property type="entry name" value="HSP20-like chaperones"/>
    <property type="match status" value="1"/>
</dbReference>
<dbReference type="PROSITE" id="PS01031">
    <property type="entry name" value="SHSP"/>
    <property type="match status" value="1"/>
</dbReference>
<sequence>MRNYDLSPLLRQWIGFDKLASALQTAGESQSFPPYNIEKSDDNHYRITLALAGFRQEDLDIQLEGIRLVVKGTPQQPEKETTWLHQGLVSQAFSLSFTLADNMEVSGATFTNGLLHIDLTRNEPEQIAPQRIAISERPALNS</sequence>
<evidence type="ECO:0000255" key="1">
    <source>
        <dbReference type="HAMAP-Rule" id="MF_02001"/>
    </source>
</evidence>
<evidence type="ECO:0000255" key="2">
    <source>
        <dbReference type="PROSITE-ProRule" id="PRU00285"/>
    </source>
</evidence>
<comment type="function">
    <text evidence="1">Associates with aggregated proteins, together with IbpA, to stabilize and protect them from irreversible denaturation and extensive proteolysis during heat shock and oxidative stress. Aggregated proteins bound to the IbpAB complex are more efficiently refolded and reactivated by the ATP-dependent chaperone systems ClpB and DnaK/DnaJ/GrpE. Its activity is ATP-independent.</text>
</comment>
<comment type="subunit">
    <text evidence="1">Homodimer. Forms homomultimers of about 100-150 subunits at optimal growth temperatures. Conformation changes to oligomers at high temperatures or high ionic concentrations. The decrease in size of the multimers is accompanied by an increase in chaperone activity.</text>
</comment>
<comment type="subcellular location">
    <subcellularLocation>
        <location evidence="1">Cytoplasm</location>
    </subcellularLocation>
</comment>
<comment type="domain">
    <text evidence="1">The N- and C-terminal flexible termini are involved in oligomerization and in the binding of non-native substrate proteins, and are essential for chaperone activity.</text>
</comment>
<comment type="similarity">
    <text evidence="1 2">Belongs to the small heat shock protein (HSP20) family.</text>
</comment>
<organism>
    <name type="scientific">Klebsiella pneumoniae subsp. pneumoniae (strain ATCC 700721 / MGH 78578)</name>
    <dbReference type="NCBI Taxonomy" id="272620"/>
    <lineage>
        <taxon>Bacteria</taxon>
        <taxon>Pseudomonadati</taxon>
        <taxon>Pseudomonadota</taxon>
        <taxon>Gammaproteobacteria</taxon>
        <taxon>Enterobacterales</taxon>
        <taxon>Enterobacteriaceae</taxon>
        <taxon>Klebsiella/Raoultella group</taxon>
        <taxon>Klebsiella</taxon>
        <taxon>Klebsiella pneumoniae complex</taxon>
    </lineage>
</organism>
<protein>
    <recommendedName>
        <fullName evidence="1">Small heat shock protein IbpB</fullName>
    </recommendedName>
    <alternativeName>
        <fullName evidence="1">16 kDa heat shock protein B</fullName>
    </alternativeName>
</protein>